<reference key="1">
    <citation type="journal article" date="2004" name="Nature">
        <title>DNA sequence and analysis of human chromosome 9.</title>
        <authorList>
            <person name="Humphray S.J."/>
            <person name="Oliver K."/>
            <person name="Hunt A.R."/>
            <person name="Plumb R.W."/>
            <person name="Loveland J.E."/>
            <person name="Howe K.L."/>
            <person name="Andrews T.D."/>
            <person name="Searle S."/>
            <person name="Hunt S.E."/>
            <person name="Scott C.E."/>
            <person name="Jones M.C."/>
            <person name="Ainscough R."/>
            <person name="Almeida J.P."/>
            <person name="Ambrose K.D."/>
            <person name="Ashwell R.I.S."/>
            <person name="Babbage A.K."/>
            <person name="Babbage S."/>
            <person name="Bagguley C.L."/>
            <person name="Bailey J."/>
            <person name="Banerjee R."/>
            <person name="Barker D.J."/>
            <person name="Barlow K.F."/>
            <person name="Bates K."/>
            <person name="Beasley H."/>
            <person name="Beasley O."/>
            <person name="Bird C.P."/>
            <person name="Bray-Allen S."/>
            <person name="Brown A.J."/>
            <person name="Brown J.Y."/>
            <person name="Burford D."/>
            <person name="Burrill W."/>
            <person name="Burton J."/>
            <person name="Carder C."/>
            <person name="Carter N.P."/>
            <person name="Chapman J.C."/>
            <person name="Chen Y."/>
            <person name="Clarke G."/>
            <person name="Clark S.Y."/>
            <person name="Clee C.M."/>
            <person name="Clegg S."/>
            <person name="Collier R.E."/>
            <person name="Corby N."/>
            <person name="Crosier M."/>
            <person name="Cummings A.T."/>
            <person name="Davies J."/>
            <person name="Dhami P."/>
            <person name="Dunn M."/>
            <person name="Dutta I."/>
            <person name="Dyer L.W."/>
            <person name="Earthrowl M.E."/>
            <person name="Faulkner L."/>
            <person name="Fleming C.J."/>
            <person name="Frankish A."/>
            <person name="Frankland J.A."/>
            <person name="French L."/>
            <person name="Fricker D.G."/>
            <person name="Garner P."/>
            <person name="Garnett J."/>
            <person name="Ghori J."/>
            <person name="Gilbert J.G.R."/>
            <person name="Glison C."/>
            <person name="Grafham D.V."/>
            <person name="Gribble S."/>
            <person name="Griffiths C."/>
            <person name="Griffiths-Jones S."/>
            <person name="Grocock R."/>
            <person name="Guy J."/>
            <person name="Hall R.E."/>
            <person name="Hammond S."/>
            <person name="Harley J.L."/>
            <person name="Harrison E.S.I."/>
            <person name="Hart E.A."/>
            <person name="Heath P.D."/>
            <person name="Henderson C.D."/>
            <person name="Hopkins B.L."/>
            <person name="Howard P.J."/>
            <person name="Howden P.J."/>
            <person name="Huckle E."/>
            <person name="Johnson C."/>
            <person name="Johnson D."/>
            <person name="Joy A.A."/>
            <person name="Kay M."/>
            <person name="Keenan S."/>
            <person name="Kershaw J.K."/>
            <person name="Kimberley A.M."/>
            <person name="King A."/>
            <person name="Knights A."/>
            <person name="Laird G.K."/>
            <person name="Langford C."/>
            <person name="Lawlor S."/>
            <person name="Leongamornlert D.A."/>
            <person name="Leversha M."/>
            <person name="Lloyd C."/>
            <person name="Lloyd D.M."/>
            <person name="Lovell J."/>
            <person name="Martin S."/>
            <person name="Mashreghi-Mohammadi M."/>
            <person name="Matthews L."/>
            <person name="McLaren S."/>
            <person name="McLay K.E."/>
            <person name="McMurray A."/>
            <person name="Milne S."/>
            <person name="Nickerson T."/>
            <person name="Nisbett J."/>
            <person name="Nordsiek G."/>
            <person name="Pearce A.V."/>
            <person name="Peck A.I."/>
            <person name="Porter K.M."/>
            <person name="Pandian R."/>
            <person name="Pelan S."/>
            <person name="Phillimore B."/>
            <person name="Povey S."/>
            <person name="Ramsey Y."/>
            <person name="Rand V."/>
            <person name="Scharfe M."/>
            <person name="Sehra H.K."/>
            <person name="Shownkeen R."/>
            <person name="Sims S.K."/>
            <person name="Skuce C.D."/>
            <person name="Smith M."/>
            <person name="Steward C.A."/>
            <person name="Swarbreck D."/>
            <person name="Sycamore N."/>
            <person name="Tester J."/>
            <person name="Thorpe A."/>
            <person name="Tracey A."/>
            <person name="Tromans A."/>
            <person name="Thomas D.W."/>
            <person name="Wall M."/>
            <person name="Wallis J.M."/>
            <person name="West A.P."/>
            <person name="Whitehead S.L."/>
            <person name="Willey D.L."/>
            <person name="Williams S.A."/>
            <person name="Wilming L."/>
            <person name="Wray P.W."/>
            <person name="Young L."/>
            <person name="Ashurst J.L."/>
            <person name="Coulson A."/>
            <person name="Blocker H."/>
            <person name="Durbin R.M."/>
            <person name="Sulston J.E."/>
            <person name="Hubbard T."/>
            <person name="Jackson M.J."/>
            <person name="Bentley D.R."/>
            <person name="Beck S."/>
            <person name="Rogers J."/>
            <person name="Dunham I."/>
        </authorList>
    </citation>
    <scope>NUCLEOTIDE SEQUENCE [LARGE SCALE GENOMIC DNA]</scope>
</reference>
<reference key="2">
    <citation type="journal article" date="2011" name="BMC Syst. Biol.">
        <title>Initial characterization of the human central proteome.</title>
        <authorList>
            <person name="Burkard T.R."/>
            <person name="Planyavsky M."/>
            <person name="Kaupe I."/>
            <person name="Breitwieser F.P."/>
            <person name="Buerckstuemmer T."/>
            <person name="Bennett K.L."/>
            <person name="Superti-Furga G."/>
            <person name="Colinge J."/>
        </authorList>
    </citation>
    <scope>IDENTIFICATION BY MASS SPECTROMETRY [LARGE SCALE ANALYSIS]</scope>
</reference>
<proteinExistence type="evidence at protein level"/>
<evidence type="ECO:0000255" key="1"/>
<evidence type="ECO:0000256" key="2">
    <source>
        <dbReference type="SAM" id="MobiDB-lite"/>
    </source>
</evidence>
<accession>A2A2Z9</accession>
<organism>
    <name type="scientific">Homo sapiens</name>
    <name type="common">Human</name>
    <dbReference type="NCBI Taxonomy" id="9606"/>
    <lineage>
        <taxon>Eukaryota</taxon>
        <taxon>Metazoa</taxon>
        <taxon>Chordata</taxon>
        <taxon>Craniata</taxon>
        <taxon>Vertebrata</taxon>
        <taxon>Euteleostomi</taxon>
        <taxon>Mammalia</taxon>
        <taxon>Eutheria</taxon>
        <taxon>Euarchontoglires</taxon>
        <taxon>Primates</taxon>
        <taxon>Haplorrhini</taxon>
        <taxon>Catarrhini</taxon>
        <taxon>Hominidae</taxon>
        <taxon>Homo</taxon>
    </lineage>
</organism>
<keyword id="KW-0040">ANK repeat</keyword>
<keyword id="KW-0175">Coiled coil</keyword>
<keyword id="KW-1185">Reference proteome</keyword>
<keyword id="KW-0677">Repeat</keyword>
<name>AN18B_HUMAN</name>
<gene>
    <name type="primary">ANKRD18B</name>
</gene>
<protein>
    <recommendedName>
        <fullName>Ankyrin repeat domain-containing protein 18B</fullName>
    </recommendedName>
</protein>
<dbReference type="EMBL" id="AL139008">
    <property type="status" value="NOT_ANNOTATED_CDS"/>
    <property type="molecule type" value="Genomic_DNA"/>
</dbReference>
<dbReference type="SMR" id="A2A2Z9"/>
<dbReference type="FunCoup" id="A2A2Z9">
    <property type="interactions" value="37"/>
</dbReference>
<dbReference type="IntAct" id="A2A2Z9">
    <property type="interactions" value="1"/>
</dbReference>
<dbReference type="MINT" id="A2A2Z9"/>
<dbReference type="STRING" id="9606.ENSP00000290943"/>
<dbReference type="iPTMnet" id="A2A2Z9"/>
<dbReference type="PhosphoSitePlus" id="A2A2Z9"/>
<dbReference type="BioMuta" id="ANKRD18B"/>
<dbReference type="jPOST" id="A2A2Z9"/>
<dbReference type="MassIVE" id="A2A2Z9"/>
<dbReference type="PaxDb" id="9606-ENSP00000290943"/>
<dbReference type="PeptideAtlas" id="A2A2Z9"/>
<dbReference type="ProteomicsDB" id="240"/>
<dbReference type="Antibodypedia" id="57403">
    <property type="antibodies" value="57 antibodies from 8 providers"/>
</dbReference>
<dbReference type="Ensembl" id="ENST00000290943.10">
    <property type="protein sequence ID" value="ENSP00000290943.6"/>
    <property type="gene ID" value="ENSG00000230453.11"/>
</dbReference>
<dbReference type="UCSC" id="uc064spz.1">
    <property type="organism name" value="human"/>
</dbReference>
<dbReference type="AGR" id="HGNC:23644"/>
<dbReference type="GeneCards" id="ANKRD18B"/>
<dbReference type="HGNC" id="HGNC:23644">
    <property type="gene designation" value="ANKRD18B"/>
</dbReference>
<dbReference type="HPA" id="ENSG00000230453">
    <property type="expression patterns" value="Tissue enhanced (brain, testis)"/>
</dbReference>
<dbReference type="MIM" id="618930">
    <property type="type" value="gene"/>
</dbReference>
<dbReference type="neXtProt" id="NX_A2A2Z9"/>
<dbReference type="OpenTargets" id="ENSG00000230453"/>
<dbReference type="VEuPathDB" id="HostDB:ENSG00000230453"/>
<dbReference type="eggNOG" id="KOG0504">
    <property type="taxonomic scope" value="Eukaryota"/>
</dbReference>
<dbReference type="GeneTree" id="ENSGT00940000163510"/>
<dbReference type="HOGENOM" id="CLU_001111_0_0_1"/>
<dbReference type="InParanoid" id="A2A2Z9"/>
<dbReference type="OMA" id="DVMYENC"/>
<dbReference type="OrthoDB" id="9535605at2759"/>
<dbReference type="PAN-GO" id="A2A2Z9">
    <property type="GO annotations" value="0 GO annotations based on evolutionary models"/>
</dbReference>
<dbReference type="PhylomeDB" id="A2A2Z9"/>
<dbReference type="TreeFam" id="TF333496"/>
<dbReference type="PathwayCommons" id="A2A2Z9"/>
<dbReference type="SignaLink" id="A2A2Z9"/>
<dbReference type="Pharos" id="A2A2Z9">
    <property type="development level" value="Tdark"/>
</dbReference>
<dbReference type="PRO" id="PR:A2A2Z9"/>
<dbReference type="Proteomes" id="UP000005640">
    <property type="component" value="Chromosome 9"/>
</dbReference>
<dbReference type="RNAct" id="A2A2Z9">
    <property type="molecule type" value="protein"/>
</dbReference>
<dbReference type="Bgee" id="ENSG00000230453">
    <property type="expression patterns" value="Expressed in male germ line stem cell (sensu Vertebrata) in testis and 101 other cell types or tissues"/>
</dbReference>
<dbReference type="ExpressionAtlas" id="A2A2Z9">
    <property type="expression patterns" value="baseline and differential"/>
</dbReference>
<dbReference type="Gene3D" id="1.25.40.20">
    <property type="entry name" value="Ankyrin repeat-containing domain"/>
    <property type="match status" value="2"/>
</dbReference>
<dbReference type="InterPro" id="IPR050657">
    <property type="entry name" value="Ankyrin_repeat_domain"/>
</dbReference>
<dbReference type="InterPro" id="IPR002110">
    <property type="entry name" value="Ankyrin_rpt"/>
</dbReference>
<dbReference type="InterPro" id="IPR036770">
    <property type="entry name" value="Ankyrin_rpt-contain_sf"/>
</dbReference>
<dbReference type="InterPro" id="IPR039497">
    <property type="entry name" value="CC144C-like_CC_dom"/>
</dbReference>
<dbReference type="InterPro" id="IPR021885">
    <property type="entry name" value="DUF3496"/>
</dbReference>
<dbReference type="PANTHER" id="PTHR24147">
    <property type="entry name" value="ANKYRIN REPEAT DOMAIN 36-RELATED"/>
    <property type="match status" value="1"/>
</dbReference>
<dbReference type="PANTHER" id="PTHR24147:SF59">
    <property type="entry name" value="ANKYRIN REPEAT DOMAIN-CONTAINING PROTEIN 18B"/>
    <property type="match status" value="1"/>
</dbReference>
<dbReference type="Pfam" id="PF12796">
    <property type="entry name" value="Ank_2"/>
    <property type="match status" value="2"/>
</dbReference>
<dbReference type="Pfam" id="PF14915">
    <property type="entry name" value="CCDC144C"/>
    <property type="match status" value="1"/>
</dbReference>
<dbReference type="Pfam" id="PF12001">
    <property type="entry name" value="DUF3496"/>
    <property type="match status" value="1"/>
</dbReference>
<dbReference type="SMART" id="SM00248">
    <property type="entry name" value="ANK"/>
    <property type="match status" value="5"/>
</dbReference>
<dbReference type="SUPFAM" id="SSF48403">
    <property type="entry name" value="Ankyrin repeat"/>
    <property type="match status" value="1"/>
</dbReference>
<dbReference type="PROSITE" id="PS50297">
    <property type="entry name" value="ANK_REP_REGION"/>
    <property type="match status" value="1"/>
</dbReference>
<dbReference type="PROSITE" id="PS50088">
    <property type="entry name" value="ANK_REPEAT"/>
    <property type="match status" value="4"/>
</dbReference>
<sequence length="1011" mass="118231">MRKLLSFGRRLGQALLSSMDQEYAGRGYHIRDWELRKIHRAAIKGDAAEVEHCLTRRFRDLDVRDRKDRTVLHLACAHGRVQVVTLLLDRKCQINICDRLNRTPLMKAVHCQEEACAIILLKRGANPNIKDIYGNTALHYAVYNEGTSLAERLLSHHANIEALNKEGNTPLLFAINSRRQHMVEFLLKNQANIHAVDNFKRTALILAVQHNLSSIVTLLLQQNIHISSQDMFGQTAEDYAFCCDLRSIQQQILEHKNKMLKNHLRNDNQETAAMKPENLKKRKKRKKLKKRKEGAKAEHNLKVASEEKQERLERSENKQPQDSQSYGKKKDEMFGNFMLKRDIAMLKEELYAIKNDSLRKEKKYIQEIKSITEINANFEKSVRLNEEMITKKVAQYSQQLNDLKAENARLNSKLEKEKHNKERLEAEVESLHSNLATAINEYNEILERKDLELVLWRADDVSRHETMGSNISQLTDKNELLTEQVHKARVKFNTLKGKLRETRDALREKTLALESVQLDLKQAQHRIKEMKQMHPNGEAKESQSIGKQNSSEERIRQRELENLLLERQLEDARKEGDNKEIVINIHRDCLENGKEDLLEERNKELMNEYNYLKEKLLQYEKEKAEREVIVREFQEELVDHLKKFSMSESPLEGTSHCHINLDETWTSKKKLFQVEIQPEEKHEEFRKVFELISLLNYTADQIRKKNRELEEEATGYKKCLEMTINMLNAFANEDFSCHGDLNTDQLKMDILFKKLKQKFDDLMAEKEAVSSKCVNLAKDNEVLHQELLSMGKVQEKCEKLEKDKKMLEEKVLNLKTHMEKDMVELGKVQEYKSELDERAMQAIEKLEEIHLQKQAEYEKQLEQLNKDNTASLKKKELTLKDVECKFSKMKTAYEDVTTELEEYKEAFAVALKANSSMSEKITKSDKKIAVISTKLFMEKERMEYFLSTLPMRPDPELPCVENLNSIELNRKYIPKMAIRIPTSNPQTSNNCKNSLTELLLRWALAPIYFLL</sequence>
<feature type="chain" id="PRO_0000317245" description="Ankyrin repeat domain-containing protein 18B">
    <location>
        <begin position="1"/>
        <end position="1011"/>
    </location>
</feature>
<feature type="repeat" description="ANK 1">
    <location>
        <begin position="67"/>
        <end position="96"/>
    </location>
</feature>
<feature type="repeat" description="ANK 2">
    <location>
        <begin position="100"/>
        <end position="129"/>
    </location>
</feature>
<feature type="repeat" description="ANK 3">
    <location>
        <begin position="133"/>
        <end position="162"/>
    </location>
</feature>
<feature type="repeat" description="ANK 4">
    <location>
        <begin position="166"/>
        <end position="195"/>
    </location>
</feature>
<feature type="repeat" description="ANK 5">
    <location>
        <begin position="199"/>
        <end position="228"/>
    </location>
</feature>
<feature type="region of interest" description="Disordered" evidence="2">
    <location>
        <begin position="264"/>
        <end position="330"/>
    </location>
</feature>
<feature type="region of interest" description="Disordered" evidence="2">
    <location>
        <begin position="533"/>
        <end position="554"/>
    </location>
</feature>
<feature type="coiled-coil region" evidence="1">
    <location>
        <begin position="277"/>
        <end position="319"/>
    </location>
</feature>
<feature type="coiled-coil region" evidence="1">
    <location>
        <begin position="385"/>
        <end position="639"/>
    </location>
</feature>
<feature type="coiled-coil region" evidence="1">
    <location>
        <begin position="692"/>
        <end position="722"/>
    </location>
</feature>
<feature type="coiled-coil region" evidence="1">
    <location>
        <begin position="752"/>
        <end position="908"/>
    </location>
</feature>
<feature type="compositionally biased region" description="Basic residues" evidence="2">
    <location>
        <begin position="280"/>
        <end position="293"/>
    </location>
</feature>
<feature type="compositionally biased region" description="Basic and acidic residues" evidence="2">
    <location>
        <begin position="294"/>
        <end position="319"/>
    </location>
</feature>